<evidence type="ECO:0000255" key="1">
    <source>
        <dbReference type="HAMAP-Rule" id="MF_01874"/>
    </source>
</evidence>
<reference key="1">
    <citation type="journal article" date="2008" name="Genome Res.">
        <title>The genome of Pelotomaculum thermopropionicum reveals niche-associated evolution in anaerobic microbiota.</title>
        <authorList>
            <person name="Kosaka T."/>
            <person name="Kato S."/>
            <person name="Shimoyama T."/>
            <person name="Ishii S."/>
            <person name="Abe T."/>
            <person name="Watanabe K."/>
        </authorList>
    </citation>
    <scope>NUCLEOTIDE SEQUENCE [LARGE SCALE GENOMIC DNA]</scope>
    <source>
        <strain>DSM 13744 / JCM 10971 / SI</strain>
    </source>
</reference>
<organism>
    <name type="scientific">Pelotomaculum thermopropionicum (strain DSM 13744 / JCM 10971 / SI)</name>
    <dbReference type="NCBI Taxonomy" id="370438"/>
    <lineage>
        <taxon>Bacteria</taxon>
        <taxon>Bacillati</taxon>
        <taxon>Bacillota</taxon>
        <taxon>Clostridia</taxon>
        <taxon>Eubacteriales</taxon>
        <taxon>Desulfotomaculaceae</taxon>
        <taxon>Pelotomaculum</taxon>
    </lineage>
</organism>
<keyword id="KW-1003">Cell membrane</keyword>
<keyword id="KW-0472">Membrane</keyword>
<keyword id="KW-1185">Reference proteome</keyword>
<keyword id="KW-0812">Transmembrane</keyword>
<keyword id="KW-1133">Transmembrane helix</keyword>
<dbReference type="EMBL" id="AP009389">
    <property type="protein sequence ID" value="BAF59998.1"/>
    <property type="molecule type" value="Genomic_DNA"/>
</dbReference>
<dbReference type="STRING" id="370438.PTH_1817"/>
<dbReference type="KEGG" id="pth:PTH_1817"/>
<dbReference type="eggNOG" id="COG2707">
    <property type="taxonomic scope" value="Bacteria"/>
</dbReference>
<dbReference type="HOGENOM" id="CLU_125889_1_0_9"/>
<dbReference type="Proteomes" id="UP000006556">
    <property type="component" value="Chromosome"/>
</dbReference>
<dbReference type="GO" id="GO:0005886">
    <property type="term" value="C:plasma membrane"/>
    <property type="evidence" value="ECO:0007669"/>
    <property type="project" value="UniProtKB-SubCell"/>
</dbReference>
<dbReference type="HAMAP" id="MF_01874">
    <property type="entry name" value="UPF0756"/>
    <property type="match status" value="1"/>
</dbReference>
<dbReference type="InterPro" id="IPR007382">
    <property type="entry name" value="UPF0756_TM"/>
</dbReference>
<dbReference type="PANTHER" id="PTHR38452">
    <property type="entry name" value="UPF0756 MEMBRANE PROTEIN YEAL"/>
    <property type="match status" value="1"/>
</dbReference>
<dbReference type="PANTHER" id="PTHR38452:SF1">
    <property type="entry name" value="UPF0756 MEMBRANE PROTEIN YEAL"/>
    <property type="match status" value="1"/>
</dbReference>
<dbReference type="Pfam" id="PF04284">
    <property type="entry name" value="DUF441"/>
    <property type="match status" value="1"/>
</dbReference>
<proteinExistence type="inferred from homology"/>
<name>Y1817_PELTS</name>
<protein>
    <recommendedName>
        <fullName evidence="1">UPF0756 membrane protein PTH_1817</fullName>
    </recommendedName>
</protein>
<sequence length="146" mass="15272">MLVVLLLIGMAAHSSLIVIAACILLILKLTNVNFIFSLLERRGLEMGLTFLLLSILVPLASGKASWQEIISSLASFSGLLAVAGGALATSLNTRGLNLLKADPEIVFGLLLGSILGIVFLHGIPVGPLMAAGITALLMQLARIFKP</sequence>
<accession>A5D176</accession>
<gene>
    <name type="ordered locus">PTH_1817</name>
</gene>
<feature type="chain" id="PRO_0000388917" description="UPF0756 membrane protein PTH_1817">
    <location>
        <begin position="1"/>
        <end position="146"/>
    </location>
</feature>
<feature type="transmembrane region" description="Helical" evidence="1">
    <location>
        <begin position="6"/>
        <end position="26"/>
    </location>
</feature>
<feature type="transmembrane region" description="Helical" evidence="1">
    <location>
        <begin position="46"/>
        <end position="66"/>
    </location>
</feature>
<feature type="transmembrane region" description="Helical" evidence="1">
    <location>
        <begin position="69"/>
        <end position="89"/>
    </location>
</feature>
<feature type="transmembrane region" description="Helical" evidence="1">
    <location>
        <begin position="105"/>
        <end position="125"/>
    </location>
</feature>
<comment type="subcellular location">
    <subcellularLocation>
        <location evidence="1">Cell membrane</location>
        <topology evidence="1">Multi-pass membrane protein</topology>
    </subcellularLocation>
</comment>
<comment type="similarity">
    <text evidence="1">Belongs to the UPF0756 family.</text>
</comment>